<dbReference type="EMBL" id="AF095788">
    <property type="protein sequence ID" value="AAD16125.1"/>
    <property type="molecule type" value="mRNA"/>
</dbReference>
<dbReference type="EMBL" id="FO081416">
    <property type="protein sequence ID" value="CCD71479.1"/>
    <property type="molecule type" value="Genomic_DNA"/>
</dbReference>
<dbReference type="PIR" id="T43666">
    <property type="entry name" value="T43666"/>
</dbReference>
<dbReference type="RefSeq" id="NP_491893.1">
    <property type="nucleotide sequence ID" value="NM_059492.8"/>
</dbReference>
<dbReference type="PDB" id="1T7S">
    <property type="method" value="X-ray"/>
    <property type="resolution" value="2.80 A"/>
    <property type="chains" value="A/B=74-210"/>
</dbReference>
<dbReference type="PDBsum" id="1T7S"/>
<dbReference type="SMR" id="O44739"/>
<dbReference type="BioGRID" id="37824">
    <property type="interactions" value="15"/>
</dbReference>
<dbReference type="DIP" id="DIP-27094N"/>
<dbReference type="FunCoup" id="O44739">
    <property type="interactions" value="1083"/>
</dbReference>
<dbReference type="IntAct" id="O44739">
    <property type="interactions" value="3"/>
</dbReference>
<dbReference type="STRING" id="6239.F57B10.11.1"/>
<dbReference type="PaxDb" id="6239-F57B10.11"/>
<dbReference type="PeptideAtlas" id="O44739"/>
<dbReference type="EnsemblMetazoa" id="F57B10.11.1">
    <property type="protein sequence ID" value="F57B10.11.1"/>
    <property type="gene ID" value="WBGene00000236"/>
</dbReference>
<dbReference type="GeneID" id="172373"/>
<dbReference type="KEGG" id="cel:CELE_F57B10.11"/>
<dbReference type="UCSC" id="F57B10.11">
    <property type="organism name" value="c. elegans"/>
</dbReference>
<dbReference type="AGR" id="WB:WBGene00000236"/>
<dbReference type="CTD" id="172373"/>
<dbReference type="WormBase" id="F57B10.11">
    <property type="protein sequence ID" value="CE11318"/>
    <property type="gene ID" value="WBGene00000236"/>
    <property type="gene designation" value="bag-1"/>
</dbReference>
<dbReference type="eggNOG" id="ENOG502S5YF">
    <property type="taxonomic scope" value="Eukaryota"/>
</dbReference>
<dbReference type="GeneTree" id="ENSGT00450000040296"/>
<dbReference type="HOGENOM" id="CLU_1316430_0_0_1"/>
<dbReference type="InParanoid" id="O44739"/>
<dbReference type="OMA" id="YLNRCEH"/>
<dbReference type="OrthoDB" id="417450at2759"/>
<dbReference type="PhylomeDB" id="O44739"/>
<dbReference type="Reactome" id="R-CEL-3371453">
    <property type="pathway name" value="Regulation of HSF1-mediated heat shock response"/>
</dbReference>
<dbReference type="EvolutionaryTrace" id="O44739"/>
<dbReference type="PRO" id="PR:O44739"/>
<dbReference type="Proteomes" id="UP000001940">
    <property type="component" value="Chromosome I"/>
</dbReference>
<dbReference type="Bgee" id="WBGene00000236">
    <property type="expression patterns" value="Expressed in germ line (C elegans) and 4 other cell types or tissues"/>
</dbReference>
<dbReference type="GO" id="GO:0005737">
    <property type="term" value="C:cytoplasm"/>
    <property type="evidence" value="ECO:0000318"/>
    <property type="project" value="GO_Central"/>
</dbReference>
<dbReference type="GO" id="GO:0005829">
    <property type="term" value="C:cytosol"/>
    <property type="evidence" value="ECO:0000318"/>
    <property type="project" value="GO_Central"/>
</dbReference>
<dbReference type="GO" id="GO:0016020">
    <property type="term" value="C:membrane"/>
    <property type="evidence" value="ECO:0000318"/>
    <property type="project" value="GO_Central"/>
</dbReference>
<dbReference type="GO" id="GO:0005634">
    <property type="term" value="C:nucleus"/>
    <property type="evidence" value="ECO:0000318"/>
    <property type="project" value="GO_Central"/>
</dbReference>
<dbReference type="GO" id="GO:0000774">
    <property type="term" value="F:adenyl-nucleotide exchange factor activity"/>
    <property type="evidence" value="ECO:0000318"/>
    <property type="project" value="GO_Central"/>
</dbReference>
<dbReference type="GO" id="GO:0001671">
    <property type="term" value="F:ATPase activator activity"/>
    <property type="evidence" value="ECO:0000314"/>
    <property type="project" value="WormBase"/>
</dbReference>
<dbReference type="GO" id="GO:0051087">
    <property type="term" value="F:protein-folding chaperone binding"/>
    <property type="evidence" value="ECO:0000250"/>
    <property type="project" value="WormBase"/>
</dbReference>
<dbReference type="GO" id="GO:0051085">
    <property type="term" value="P:chaperone cofactor-dependent protein refolding"/>
    <property type="evidence" value="ECO:0000250"/>
    <property type="project" value="WormBase"/>
</dbReference>
<dbReference type="GO" id="GO:0050821">
    <property type="term" value="P:protein stabilization"/>
    <property type="evidence" value="ECO:0000318"/>
    <property type="project" value="GO_Central"/>
</dbReference>
<dbReference type="Gene3D" id="1.20.58.120">
    <property type="entry name" value="BAG domain"/>
    <property type="match status" value="1"/>
</dbReference>
<dbReference type="Gene3D" id="3.10.20.90">
    <property type="entry name" value="Phosphatidylinositol 3-kinase Catalytic Subunit, Chain A, domain 1"/>
    <property type="match status" value="1"/>
</dbReference>
<dbReference type="InterPro" id="IPR017093">
    <property type="entry name" value="BAG-1"/>
</dbReference>
<dbReference type="InterPro" id="IPR036533">
    <property type="entry name" value="BAG_dom_sf"/>
</dbReference>
<dbReference type="InterPro" id="IPR003103">
    <property type="entry name" value="BAG_domain"/>
</dbReference>
<dbReference type="InterPro" id="IPR000626">
    <property type="entry name" value="Ubiquitin-like_dom"/>
</dbReference>
<dbReference type="InterPro" id="IPR029071">
    <property type="entry name" value="Ubiquitin-like_domsf"/>
</dbReference>
<dbReference type="Pfam" id="PF02179">
    <property type="entry name" value="BAG"/>
    <property type="match status" value="1"/>
</dbReference>
<dbReference type="Pfam" id="PF00240">
    <property type="entry name" value="ubiquitin"/>
    <property type="match status" value="1"/>
</dbReference>
<dbReference type="PIRSF" id="PIRSF037029">
    <property type="entry name" value="BAG_1"/>
    <property type="match status" value="1"/>
</dbReference>
<dbReference type="SMART" id="SM00264">
    <property type="entry name" value="BAG"/>
    <property type="match status" value="1"/>
</dbReference>
<dbReference type="SUPFAM" id="SSF63491">
    <property type="entry name" value="BAG domain"/>
    <property type="match status" value="1"/>
</dbReference>
<dbReference type="SUPFAM" id="SSF54236">
    <property type="entry name" value="Ubiquitin-like"/>
    <property type="match status" value="1"/>
</dbReference>
<dbReference type="PROSITE" id="PS51035">
    <property type="entry name" value="BAG"/>
    <property type="match status" value="1"/>
</dbReference>
<dbReference type="PROSITE" id="PS50053">
    <property type="entry name" value="UBIQUITIN_2"/>
    <property type="match status" value="1"/>
</dbReference>
<sequence length="210" mass="24010">MKVNVSCSSVQTTIDILEENQGEDESILTLGQLRDRIATDNDVDVETMKLLHRGKFLQGADDVSLSTLNFKENDKIIVMGGKNALVDDAGFKMLMQYEKHNLSNLQKAYDLNLRDVADLERGFLEKPKQVEMGKKLEKKVKYFNEEAERHLETLDGMNIITETTPENQAKRNREKRKTLVNGIQTLLNQNDALLRRLQEYQSVLNGDIPE</sequence>
<gene>
    <name type="primary">bag-1</name>
    <name type="ORF">F57B10.11</name>
</gene>
<comment type="function">
    <text evidence="1">May inhibit the chaperone activity of HSP70/HSC70 by promoting substrate release in an ATP-dependent manner.</text>
</comment>
<comment type="subunit">
    <text evidence="4">Homodimer or homotetramer.</text>
</comment>
<comment type="interaction">
    <interactant intactId="EBI-323218">
        <id>O44739</id>
    </interactant>
    <interactant intactId="EBI-323231">
        <id>Q9XWX7</id>
        <label>CELE_Y43F8B.2</label>
    </interactant>
    <organismsDiffer>false</organismsDiffer>
    <experiments>3</experiments>
</comment>
<comment type="domain">
    <text evidence="1">The BAG domain probably mediates direct interaction with HSP70.</text>
</comment>
<accession>O44739</accession>
<keyword id="KW-0002">3D-structure</keyword>
<keyword id="KW-0143">Chaperone</keyword>
<keyword id="KW-1185">Reference proteome</keyword>
<organism>
    <name type="scientific">Caenorhabditis elegans</name>
    <dbReference type="NCBI Taxonomy" id="6239"/>
    <lineage>
        <taxon>Eukaryota</taxon>
        <taxon>Metazoa</taxon>
        <taxon>Ecdysozoa</taxon>
        <taxon>Nematoda</taxon>
        <taxon>Chromadorea</taxon>
        <taxon>Rhabditida</taxon>
        <taxon>Rhabditina</taxon>
        <taxon>Rhabditomorpha</taxon>
        <taxon>Rhabditoidea</taxon>
        <taxon>Rhabditidae</taxon>
        <taxon>Peloderinae</taxon>
        <taxon>Caenorhabditis</taxon>
    </lineage>
</organism>
<reference key="1">
    <citation type="journal article" date="1999" name="J. Biol. Chem.">
        <title>An evolutionarily conserved family of Hsp70/Hsc70 molecular chaperone regulators.</title>
        <authorList>
            <person name="Takayama S."/>
            <person name="Xie Z."/>
            <person name="Reed J.C."/>
        </authorList>
    </citation>
    <scope>NUCLEOTIDE SEQUENCE [MRNA]</scope>
</reference>
<reference key="2">
    <citation type="journal article" date="1998" name="Science">
        <title>Genome sequence of the nematode C. elegans: a platform for investigating biology.</title>
        <authorList>
            <consortium name="The C. elegans sequencing consortium"/>
        </authorList>
    </citation>
    <scope>NUCLEOTIDE SEQUENCE [LARGE SCALE GENOMIC DNA]</scope>
    <source>
        <strain>Bristol N2</strain>
    </source>
</reference>
<reference key="3">
    <citation type="journal article" date="2004" name="Acta Crystallogr. D">
        <title>Structural genomics of Caenorhabditis elegans: structure of the BAG domain.</title>
        <authorList>
            <person name="Symersky J."/>
            <person name="Zhang Y."/>
            <person name="Schormann N."/>
            <person name="Li S."/>
            <person name="Bunzel R."/>
            <person name="Pruett P."/>
            <person name="Luan C.-H."/>
            <person name="Luo M."/>
        </authorList>
    </citation>
    <scope>X-RAY CRYSTALLOGRAPHY (2.8 ANGSTROMS) OF 74-210</scope>
    <scope>SUBUNIT</scope>
</reference>
<proteinExistence type="evidence at protein level"/>
<feature type="chain" id="PRO_0000088877" description="BAG family molecular chaperone regulator 1">
    <location>
        <begin position="1"/>
        <end position="210"/>
    </location>
</feature>
<feature type="domain" description="Ubiquitin-like" evidence="2">
    <location>
        <begin position="8"/>
        <end position="85"/>
    </location>
</feature>
<feature type="domain" description="BAG" evidence="3">
    <location>
        <begin position="108"/>
        <end position="194"/>
    </location>
</feature>
<feature type="strand" evidence="5">
    <location>
        <begin position="77"/>
        <end position="79"/>
    </location>
</feature>
<feature type="strand" evidence="5">
    <location>
        <begin position="81"/>
        <end position="86"/>
    </location>
</feature>
<feature type="helix" evidence="5">
    <location>
        <begin position="88"/>
        <end position="121"/>
    </location>
</feature>
<feature type="helix" evidence="5">
    <location>
        <begin position="126"/>
        <end position="155"/>
    </location>
</feature>
<feature type="strand" evidence="5">
    <location>
        <begin position="157"/>
        <end position="159"/>
    </location>
</feature>
<feature type="helix" evidence="5">
    <location>
        <begin position="165"/>
        <end position="167"/>
    </location>
</feature>
<feature type="helix" evidence="5">
    <location>
        <begin position="170"/>
        <end position="200"/>
    </location>
</feature>
<name>BAG1_CAEEL</name>
<evidence type="ECO:0000250" key="1"/>
<evidence type="ECO:0000255" key="2">
    <source>
        <dbReference type="PROSITE-ProRule" id="PRU00214"/>
    </source>
</evidence>
<evidence type="ECO:0000255" key="3">
    <source>
        <dbReference type="PROSITE-ProRule" id="PRU00369"/>
    </source>
</evidence>
<evidence type="ECO:0000269" key="4">
    <source>
    </source>
</evidence>
<evidence type="ECO:0007829" key="5">
    <source>
        <dbReference type="PDB" id="1T7S"/>
    </source>
</evidence>
<protein>
    <recommendedName>
        <fullName>BAG family molecular chaperone regulator 1</fullName>
    </recommendedName>
</protein>